<reference key="1">
    <citation type="submission" date="2006-05" db="EMBL/GenBank/DDBJ databases">
        <title>Complete sequence of chromosome of Silicibacter sp. TM1040.</title>
        <authorList>
            <consortium name="US DOE Joint Genome Institute"/>
            <person name="Copeland A."/>
            <person name="Lucas S."/>
            <person name="Lapidus A."/>
            <person name="Barry K."/>
            <person name="Detter J.C."/>
            <person name="Glavina del Rio T."/>
            <person name="Hammon N."/>
            <person name="Israni S."/>
            <person name="Dalin E."/>
            <person name="Tice H."/>
            <person name="Pitluck S."/>
            <person name="Brettin T."/>
            <person name="Bruce D."/>
            <person name="Han C."/>
            <person name="Tapia R."/>
            <person name="Goodwin L."/>
            <person name="Thompson L.S."/>
            <person name="Gilna P."/>
            <person name="Schmutz J."/>
            <person name="Larimer F."/>
            <person name="Land M."/>
            <person name="Hauser L."/>
            <person name="Kyrpides N."/>
            <person name="Kim E."/>
            <person name="Belas R."/>
            <person name="Moran M.A."/>
            <person name="Buchan A."/>
            <person name="Gonzalez J.M."/>
            <person name="Schell M.A."/>
            <person name="Sun F."/>
            <person name="Richardson P."/>
        </authorList>
    </citation>
    <scope>NUCLEOTIDE SEQUENCE [LARGE SCALE GENOMIC DNA]</scope>
    <source>
        <strain>TM1040</strain>
    </source>
</reference>
<feature type="chain" id="PRO_1000013929" description="Ubiquinone biosynthesis O-methyltransferase">
    <location>
        <begin position="1"/>
        <end position="247"/>
    </location>
</feature>
<feature type="binding site" evidence="1">
    <location>
        <position position="40"/>
    </location>
    <ligand>
        <name>S-adenosyl-L-methionine</name>
        <dbReference type="ChEBI" id="CHEBI:59789"/>
    </ligand>
</feature>
<feature type="binding site" evidence="1">
    <location>
        <position position="71"/>
    </location>
    <ligand>
        <name>S-adenosyl-L-methionine</name>
        <dbReference type="ChEBI" id="CHEBI:59789"/>
    </ligand>
</feature>
<feature type="binding site" evidence="1">
    <location>
        <position position="92"/>
    </location>
    <ligand>
        <name>S-adenosyl-L-methionine</name>
        <dbReference type="ChEBI" id="CHEBI:59789"/>
    </ligand>
</feature>
<feature type="binding site" evidence="1">
    <location>
        <position position="135"/>
    </location>
    <ligand>
        <name>S-adenosyl-L-methionine</name>
        <dbReference type="ChEBI" id="CHEBI:59789"/>
    </ligand>
</feature>
<gene>
    <name evidence="1" type="primary">ubiG</name>
    <name type="ordered locus">TM1040_2906</name>
</gene>
<dbReference type="EC" id="2.1.1.222" evidence="1"/>
<dbReference type="EC" id="2.1.1.64" evidence="1"/>
<dbReference type="EMBL" id="CP000377">
    <property type="protein sequence ID" value="ABF65638.1"/>
    <property type="molecule type" value="Genomic_DNA"/>
</dbReference>
<dbReference type="RefSeq" id="WP_011540219.1">
    <property type="nucleotide sequence ID" value="NC_008044.1"/>
</dbReference>
<dbReference type="SMR" id="Q1GCH8"/>
<dbReference type="STRING" id="292414.TM1040_2906"/>
<dbReference type="KEGG" id="sit:TM1040_2906"/>
<dbReference type="eggNOG" id="COG2227">
    <property type="taxonomic scope" value="Bacteria"/>
</dbReference>
<dbReference type="HOGENOM" id="CLU_042432_2_1_5"/>
<dbReference type="OrthoDB" id="9801538at2"/>
<dbReference type="UniPathway" id="UPA00232"/>
<dbReference type="Proteomes" id="UP000000636">
    <property type="component" value="Chromosome"/>
</dbReference>
<dbReference type="GO" id="GO:0102208">
    <property type="term" value="F:2-polyprenyl-6-hydroxyphenol methylase activity"/>
    <property type="evidence" value="ECO:0007669"/>
    <property type="project" value="UniProtKB-EC"/>
</dbReference>
<dbReference type="GO" id="GO:0061542">
    <property type="term" value="F:3-demethylubiquinol 3-O-methyltransferase activity"/>
    <property type="evidence" value="ECO:0007669"/>
    <property type="project" value="UniProtKB-UniRule"/>
</dbReference>
<dbReference type="GO" id="GO:0010420">
    <property type="term" value="F:polyprenyldihydroxybenzoate methyltransferase activity"/>
    <property type="evidence" value="ECO:0007669"/>
    <property type="project" value="InterPro"/>
</dbReference>
<dbReference type="GO" id="GO:0032259">
    <property type="term" value="P:methylation"/>
    <property type="evidence" value="ECO:0007669"/>
    <property type="project" value="UniProtKB-KW"/>
</dbReference>
<dbReference type="CDD" id="cd02440">
    <property type="entry name" value="AdoMet_MTases"/>
    <property type="match status" value="1"/>
</dbReference>
<dbReference type="Gene3D" id="3.40.50.150">
    <property type="entry name" value="Vaccinia Virus protein VP39"/>
    <property type="match status" value="1"/>
</dbReference>
<dbReference type="HAMAP" id="MF_00472">
    <property type="entry name" value="UbiG"/>
    <property type="match status" value="1"/>
</dbReference>
<dbReference type="InterPro" id="IPR029063">
    <property type="entry name" value="SAM-dependent_MTases_sf"/>
</dbReference>
<dbReference type="InterPro" id="IPR010233">
    <property type="entry name" value="UbiG_MeTrfase"/>
</dbReference>
<dbReference type="NCBIfam" id="TIGR01983">
    <property type="entry name" value="UbiG"/>
    <property type="match status" value="1"/>
</dbReference>
<dbReference type="PANTHER" id="PTHR43464">
    <property type="entry name" value="METHYLTRANSFERASE"/>
    <property type="match status" value="1"/>
</dbReference>
<dbReference type="PANTHER" id="PTHR43464:SF19">
    <property type="entry name" value="UBIQUINONE BIOSYNTHESIS O-METHYLTRANSFERASE, MITOCHONDRIAL"/>
    <property type="match status" value="1"/>
</dbReference>
<dbReference type="Pfam" id="PF13489">
    <property type="entry name" value="Methyltransf_23"/>
    <property type="match status" value="1"/>
</dbReference>
<dbReference type="SUPFAM" id="SSF53335">
    <property type="entry name" value="S-adenosyl-L-methionine-dependent methyltransferases"/>
    <property type="match status" value="1"/>
</dbReference>
<sequence length="247" mass="27228">MQAQQSTVDPSEIAKFEAMAAEWWDPNGKFKPLHMLNPCRLDYITSQIAGEFDRDLKTDAPFAGLRILDIGCGGGLLSEPMARLGAEVVGADAAEGNLPVARIHAEQSGLEIDYRHTTAEAMAEAGEQFDVVLNMEVVEHVADPLSYLTATQQLLKSGGLQICSTINRNPKSYAMAIFGAEVVMRWLPRGTHEWSKFITPDELFALLEQAGLNPVDRKGFVFNPILWKWSISDRDLSVNYVTASTKS</sequence>
<proteinExistence type="inferred from homology"/>
<accession>Q1GCH8</accession>
<keyword id="KW-0489">Methyltransferase</keyword>
<keyword id="KW-1185">Reference proteome</keyword>
<keyword id="KW-0949">S-adenosyl-L-methionine</keyword>
<keyword id="KW-0808">Transferase</keyword>
<keyword id="KW-0831">Ubiquinone biosynthesis</keyword>
<organism>
    <name type="scientific">Ruegeria sp. (strain TM1040)</name>
    <name type="common">Silicibacter sp.</name>
    <dbReference type="NCBI Taxonomy" id="292414"/>
    <lineage>
        <taxon>Bacteria</taxon>
        <taxon>Pseudomonadati</taxon>
        <taxon>Pseudomonadota</taxon>
        <taxon>Alphaproteobacteria</taxon>
        <taxon>Rhodobacterales</taxon>
        <taxon>Roseobacteraceae</taxon>
        <taxon>Ruegeria</taxon>
    </lineage>
</organism>
<name>UBIG_RUEST</name>
<comment type="function">
    <text evidence="1">O-methyltransferase that catalyzes the 2 O-methylation steps in the ubiquinone biosynthetic pathway.</text>
</comment>
<comment type="catalytic activity">
    <reaction evidence="1">
        <text>a 3-demethylubiquinol + S-adenosyl-L-methionine = a ubiquinol + S-adenosyl-L-homocysteine + H(+)</text>
        <dbReference type="Rhea" id="RHEA:44380"/>
        <dbReference type="Rhea" id="RHEA-COMP:9566"/>
        <dbReference type="Rhea" id="RHEA-COMP:10914"/>
        <dbReference type="ChEBI" id="CHEBI:15378"/>
        <dbReference type="ChEBI" id="CHEBI:17976"/>
        <dbReference type="ChEBI" id="CHEBI:57856"/>
        <dbReference type="ChEBI" id="CHEBI:59789"/>
        <dbReference type="ChEBI" id="CHEBI:84422"/>
        <dbReference type="EC" id="2.1.1.64"/>
    </reaction>
</comment>
<comment type="catalytic activity">
    <reaction evidence="1">
        <text>a 3-(all-trans-polyprenyl)benzene-1,2-diol + S-adenosyl-L-methionine = a 2-methoxy-6-(all-trans-polyprenyl)phenol + S-adenosyl-L-homocysteine + H(+)</text>
        <dbReference type="Rhea" id="RHEA:31411"/>
        <dbReference type="Rhea" id="RHEA-COMP:9550"/>
        <dbReference type="Rhea" id="RHEA-COMP:9551"/>
        <dbReference type="ChEBI" id="CHEBI:15378"/>
        <dbReference type="ChEBI" id="CHEBI:57856"/>
        <dbReference type="ChEBI" id="CHEBI:59789"/>
        <dbReference type="ChEBI" id="CHEBI:62729"/>
        <dbReference type="ChEBI" id="CHEBI:62731"/>
        <dbReference type="EC" id="2.1.1.222"/>
    </reaction>
</comment>
<comment type="pathway">
    <text evidence="1">Cofactor biosynthesis; ubiquinone biosynthesis.</text>
</comment>
<comment type="similarity">
    <text evidence="1">Belongs to the methyltransferase superfamily. UbiG/COQ3 family.</text>
</comment>
<protein>
    <recommendedName>
        <fullName evidence="1">Ubiquinone biosynthesis O-methyltransferase</fullName>
    </recommendedName>
    <alternativeName>
        <fullName evidence="1">2-polyprenyl-6-hydroxyphenol methylase</fullName>
        <ecNumber evidence="1">2.1.1.222</ecNumber>
    </alternativeName>
    <alternativeName>
        <fullName evidence="1">3-demethylubiquinone 3-O-methyltransferase</fullName>
        <ecNumber evidence="1">2.1.1.64</ecNumber>
    </alternativeName>
</protein>
<evidence type="ECO:0000255" key="1">
    <source>
        <dbReference type="HAMAP-Rule" id="MF_00472"/>
    </source>
</evidence>